<protein>
    <recommendedName>
        <fullName>Uncharacterized protein YbcW</fullName>
    </recommendedName>
</protein>
<gene>
    <name type="primary">ybcW</name>
    <name type="ordered locus">b0559</name>
    <name type="ordered locus">JW0548</name>
</gene>
<organism>
    <name type="scientific">Escherichia coli (strain K12)</name>
    <dbReference type="NCBI Taxonomy" id="83333"/>
    <lineage>
        <taxon>Bacteria</taxon>
        <taxon>Pseudomonadati</taxon>
        <taxon>Pseudomonadota</taxon>
        <taxon>Gammaproteobacteria</taxon>
        <taxon>Enterobacterales</taxon>
        <taxon>Enterobacteriaceae</taxon>
        <taxon>Escherichia</taxon>
    </lineage>
</organism>
<evidence type="ECO:0000255" key="1"/>
<accession>P64435</accession>
<accession>P75720</accession>
<accession>Q2MBM1</accession>
<comment type="miscellaneous">
    <text>Encoded by the cryptic lambdoid prophage DLP12.</text>
</comment>
<reference key="1">
    <citation type="journal article" date="1997" name="Science">
        <title>The complete genome sequence of Escherichia coli K-12.</title>
        <authorList>
            <person name="Blattner F.R."/>
            <person name="Plunkett G. III"/>
            <person name="Bloch C.A."/>
            <person name="Perna N.T."/>
            <person name="Burland V."/>
            <person name="Riley M."/>
            <person name="Collado-Vides J."/>
            <person name="Glasner J.D."/>
            <person name="Rode C.K."/>
            <person name="Mayhew G.F."/>
            <person name="Gregor J."/>
            <person name="Davis N.W."/>
            <person name="Kirkpatrick H.A."/>
            <person name="Goeden M.A."/>
            <person name="Rose D.J."/>
            <person name="Mau B."/>
            <person name="Shao Y."/>
        </authorList>
    </citation>
    <scope>NUCLEOTIDE SEQUENCE [LARGE SCALE GENOMIC DNA]</scope>
    <source>
        <strain>K12 / MG1655 / ATCC 47076</strain>
    </source>
</reference>
<reference key="2">
    <citation type="journal article" date="2006" name="Mol. Syst. Biol.">
        <title>Highly accurate genome sequences of Escherichia coli K-12 strains MG1655 and W3110.</title>
        <authorList>
            <person name="Hayashi K."/>
            <person name="Morooka N."/>
            <person name="Yamamoto Y."/>
            <person name="Fujita K."/>
            <person name="Isono K."/>
            <person name="Choi S."/>
            <person name="Ohtsubo E."/>
            <person name="Baba T."/>
            <person name="Wanner B.L."/>
            <person name="Mori H."/>
            <person name="Horiuchi T."/>
        </authorList>
    </citation>
    <scope>NUCLEOTIDE SEQUENCE [LARGE SCALE GENOMIC DNA]</scope>
    <source>
        <strain>K12 / W3110 / ATCC 27325 / DSM 5911</strain>
    </source>
</reference>
<name>YBCW_ECOLI</name>
<sequence>MNKEQSADDPSVDLIRVKNMLNSTISMSYPDVVIACIEHKVSLEAFRAIEAALVKHDNNMKDYSLVVD</sequence>
<feature type="signal peptide" evidence="1">
    <location>
        <begin position="1"/>
        <end position="28"/>
    </location>
</feature>
<feature type="chain" id="PRO_0000013798" description="Uncharacterized protein YbcW">
    <location>
        <begin position="29"/>
        <end position="68"/>
    </location>
</feature>
<proteinExistence type="inferred from homology"/>
<keyword id="KW-1185">Reference proteome</keyword>
<keyword id="KW-0732">Signal</keyword>
<dbReference type="EMBL" id="U00096">
    <property type="protein sequence ID" value="AAC73660.1"/>
    <property type="molecule type" value="Genomic_DNA"/>
</dbReference>
<dbReference type="EMBL" id="AP009048">
    <property type="protein sequence ID" value="BAE76335.1"/>
    <property type="molecule type" value="Genomic_DNA"/>
</dbReference>
<dbReference type="PIR" id="E64788">
    <property type="entry name" value="E64788"/>
</dbReference>
<dbReference type="RefSeq" id="NP_415091.1">
    <property type="nucleotide sequence ID" value="NC_000913.3"/>
</dbReference>
<dbReference type="RefSeq" id="WP_001031427.1">
    <property type="nucleotide sequence ID" value="NZ_LN832404.1"/>
</dbReference>
<dbReference type="BioGRID" id="4259887">
    <property type="interactions" value="13"/>
</dbReference>
<dbReference type="BioGRID" id="849561">
    <property type="interactions" value="1"/>
</dbReference>
<dbReference type="DIP" id="DIP-11340N"/>
<dbReference type="FunCoup" id="P64435">
    <property type="interactions" value="179"/>
</dbReference>
<dbReference type="IntAct" id="P64435">
    <property type="interactions" value="3"/>
</dbReference>
<dbReference type="STRING" id="511145.b0559"/>
<dbReference type="PaxDb" id="511145-b0559"/>
<dbReference type="EnsemblBacteria" id="AAC73660">
    <property type="protein sequence ID" value="AAC73660"/>
    <property type="gene ID" value="b0559"/>
</dbReference>
<dbReference type="GeneID" id="945175"/>
<dbReference type="KEGG" id="ecj:JW0548"/>
<dbReference type="KEGG" id="eco:b0559"/>
<dbReference type="KEGG" id="ecoc:C3026_02765"/>
<dbReference type="KEGG" id="ecoc:C3026_04125"/>
<dbReference type="KEGG" id="ecoc:C3026_04445"/>
<dbReference type="KEGG" id="ecoc:C3026_04765"/>
<dbReference type="PATRIC" id="fig|511145.12.peg.582"/>
<dbReference type="EchoBASE" id="EB3403"/>
<dbReference type="HOGENOM" id="CLU_202452_0_0_6"/>
<dbReference type="InParanoid" id="P64435"/>
<dbReference type="OMA" id="CTEAPSQ"/>
<dbReference type="OrthoDB" id="7065308at2"/>
<dbReference type="BioCyc" id="EcoCyc:G6314-MONOMER"/>
<dbReference type="PRO" id="PR:P64435"/>
<dbReference type="Proteomes" id="UP000000625">
    <property type="component" value="Chromosome"/>
</dbReference>